<comment type="function">
    <text evidence="1">The electron transfer flavoprotein serves as a specific electron acceptor for several dehydrogenases, including five acyl-CoA dehydrogenases, glutaryl-CoA and sarcosine dehydrogenase. It transfers the electrons to the main mitochondrial respiratory chain via ETF-ubiquinone oxidoreductase (ETF dehydrogenase) (By similarity).</text>
</comment>
<comment type="cofactor">
    <cofactor evidence="1">
        <name>FAD</name>
        <dbReference type="ChEBI" id="CHEBI:57692"/>
    </cofactor>
    <text evidence="1">Binds 1 FAD per dimer.</text>
</comment>
<comment type="cofactor">
    <cofactor evidence="1">
        <name>AMP</name>
        <dbReference type="ChEBI" id="CHEBI:456215"/>
    </cofactor>
    <text evidence="1">Binds 1 AMP per subunit.</text>
</comment>
<comment type="subunit">
    <text evidence="1">Heterodimer of an alpha and a beta subunit.</text>
</comment>
<comment type="subcellular location">
    <subcellularLocation>
        <location evidence="1">Mitochondrion matrix</location>
    </subcellularLocation>
</comment>
<comment type="similarity">
    <text evidence="2">Belongs to the ETF beta-subunit/FixA family.</text>
</comment>
<keyword id="KW-0249">Electron transport</keyword>
<keyword id="KW-0274">FAD</keyword>
<keyword id="KW-0285">Flavoprotein</keyword>
<keyword id="KW-0496">Mitochondrion</keyword>
<keyword id="KW-1185">Reference proteome</keyword>
<keyword id="KW-0813">Transport</keyword>
<name>ETFB_SCHPO</name>
<feature type="chain" id="PRO_0000167873" description="Probable electron transfer flavoprotein subunit beta">
    <location>
        <begin position="1"/>
        <end position="254"/>
    </location>
</feature>
<sequence length="254" mass="27744">MSKIRILVGVKRTLDYMLKPRINATKTAVDLSGQKMSINPFCDIAVEEAIRMKETLKNRIEDTLVVTAGQTSSEPILRQCLAKGIGRAALINVGEKELEPLSVAKLLKATVEKEKSNLVLLGKQAIDDDAHQTGGMLAAMLGWPQFTSASKVRIEGDKVIVTREIDGGEETLSSTLPAIITTDLRLNVPRFANLAKVMKARKAPLGKMSPEDLGVTIDQRLQTVSVSEPVQKRQNIMVKSVDEMVKTLKELGAL</sequence>
<accession>Q9UTH2</accession>
<proteinExistence type="inferred from homology"/>
<reference key="1">
    <citation type="journal article" date="2002" name="Nature">
        <title>The genome sequence of Schizosaccharomyces pombe.</title>
        <authorList>
            <person name="Wood V."/>
            <person name="Gwilliam R."/>
            <person name="Rajandream M.A."/>
            <person name="Lyne M.H."/>
            <person name="Lyne R."/>
            <person name="Stewart A."/>
            <person name="Sgouros J.G."/>
            <person name="Peat N."/>
            <person name="Hayles J."/>
            <person name="Baker S.G."/>
            <person name="Basham D."/>
            <person name="Bowman S."/>
            <person name="Brooks K."/>
            <person name="Brown D."/>
            <person name="Brown S."/>
            <person name="Chillingworth T."/>
            <person name="Churcher C.M."/>
            <person name="Collins M."/>
            <person name="Connor R."/>
            <person name="Cronin A."/>
            <person name="Davis P."/>
            <person name="Feltwell T."/>
            <person name="Fraser A."/>
            <person name="Gentles S."/>
            <person name="Goble A."/>
            <person name="Hamlin N."/>
            <person name="Harris D.E."/>
            <person name="Hidalgo J."/>
            <person name="Hodgson G."/>
            <person name="Holroyd S."/>
            <person name="Hornsby T."/>
            <person name="Howarth S."/>
            <person name="Huckle E.J."/>
            <person name="Hunt S."/>
            <person name="Jagels K."/>
            <person name="James K.D."/>
            <person name="Jones L."/>
            <person name="Jones M."/>
            <person name="Leather S."/>
            <person name="McDonald S."/>
            <person name="McLean J."/>
            <person name="Mooney P."/>
            <person name="Moule S."/>
            <person name="Mungall K.L."/>
            <person name="Murphy L.D."/>
            <person name="Niblett D."/>
            <person name="Odell C."/>
            <person name="Oliver K."/>
            <person name="O'Neil S."/>
            <person name="Pearson D."/>
            <person name="Quail M.A."/>
            <person name="Rabbinowitsch E."/>
            <person name="Rutherford K.M."/>
            <person name="Rutter S."/>
            <person name="Saunders D."/>
            <person name="Seeger K."/>
            <person name="Sharp S."/>
            <person name="Skelton J."/>
            <person name="Simmonds M.N."/>
            <person name="Squares R."/>
            <person name="Squares S."/>
            <person name="Stevens K."/>
            <person name="Taylor K."/>
            <person name="Taylor R.G."/>
            <person name="Tivey A."/>
            <person name="Walsh S.V."/>
            <person name="Warren T."/>
            <person name="Whitehead S."/>
            <person name="Woodward J.R."/>
            <person name="Volckaert G."/>
            <person name="Aert R."/>
            <person name="Robben J."/>
            <person name="Grymonprez B."/>
            <person name="Weltjens I."/>
            <person name="Vanstreels E."/>
            <person name="Rieger M."/>
            <person name="Schaefer M."/>
            <person name="Mueller-Auer S."/>
            <person name="Gabel C."/>
            <person name="Fuchs M."/>
            <person name="Duesterhoeft A."/>
            <person name="Fritzc C."/>
            <person name="Holzer E."/>
            <person name="Moestl D."/>
            <person name="Hilbert H."/>
            <person name="Borzym K."/>
            <person name="Langer I."/>
            <person name="Beck A."/>
            <person name="Lehrach H."/>
            <person name="Reinhardt R."/>
            <person name="Pohl T.M."/>
            <person name="Eger P."/>
            <person name="Zimmermann W."/>
            <person name="Wedler H."/>
            <person name="Wambutt R."/>
            <person name="Purnelle B."/>
            <person name="Goffeau A."/>
            <person name="Cadieu E."/>
            <person name="Dreano S."/>
            <person name="Gloux S."/>
            <person name="Lelaure V."/>
            <person name="Mottier S."/>
            <person name="Galibert F."/>
            <person name="Aves S.J."/>
            <person name="Xiang Z."/>
            <person name="Hunt C."/>
            <person name="Moore K."/>
            <person name="Hurst S.M."/>
            <person name="Lucas M."/>
            <person name="Rochet M."/>
            <person name="Gaillardin C."/>
            <person name="Tallada V.A."/>
            <person name="Garzon A."/>
            <person name="Thode G."/>
            <person name="Daga R.R."/>
            <person name="Cruzado L."/>
            <person name="Jimenez J."/>
            <person name="Sanchez M."/>
            <person name="del Rey F."/>
            <person name="Benito J."/>
            <person name="Dominguez A."/>
            <person name="Revuelta J.L."/>
            <person name="Moreno S."/>
            <person name="Armstrong J."/>
            <person name="Forsburg S.L."/>
            <person name="Cerutti L."/>
            <person name="Lowe T."/>
            <person name="McCombie W.R."/>
            <person name="Paulsen I."/>
            <person name="Potashkin J."/>
            <person name="Shpakovski G.V."/>
            <person name="Ussery D."/>
            <person name="Barrell B.G."/>
            <person name="Nurse P."/>
        </authorList>
    </citation>
    <scope>NUCLEOTIDE SEQUENCE [LARGE SCALE GENOMIC DNA]</scope>
    <source>
        <strain>972 / ATCC 24843</strain>
    </source>
</reference>
<dbReference type="EMBL" id="CU329670">
    <property type="protein sequence ID" value="CAB55843.1"/>
    <property type="molecule type" value="Genomic_DNA"/>
</dbReference>
<dbReference type="PIR" id="T37887">
    <property type="entry name" value="T37887"/>
</dbReference>
<dbReference type="SMR" id="Q9UTH2"/>
<dbReference type="BioGRID" id="278849">
    <property type="interactions" value="6"/>
</dbReference>
<dbReference type="FunCoup" id="Q9UTH2">
    <property type="interactions" value="155"/>
</dbReference>
<dbReference type="STRING" id="284812.Q9UTH2"/>
<dbReference type="iPTMnet" id="Q9UTH2"/>
<dbReference type="PaxDb" id="4896-SPAC1805.02c.1"/>
<dbReference type="EnsemblFungi" id="SPAC1805.02c.1">
    <property type="protein sequence ID" value="SPAC1805.02c.1:pep"/>
    <property type="gene ID" value="SPAC1805.02c"/>
</dbReference>
<dbReference type="KEGG" id="spo:2542385"/>
<dbReference type="PomBase" id="SPAC1805.02c"/>
<dbReference type="VEuPathDB" id="FungiDB:SPAC1805.02c"/>
<dbReference type="eggNOG" id="KOG3180">
    <property type="taxonomic scope" value="Eukaryota"/>
</dbReference>
<dbReference type="HOGENOM" id="CLU_060196_0_0_1"/>
<dbReference type="InParanoid" id="Q9UTH2"/>
<dbReference type="OMA" id="EINQPRI"/>
<dbReference type="PhylomeDB" id="Q9UTH2"/>
<dbReference type="Reactome" id="R-SPO-611105">
    <property type="pathway name" value="Respiratory electron transport"/>
</dbReference>
<dbReference type="PRO" id="PR:Q9UTH2"/>
<dbReference type="Proteomes" id="UP000002485">
    <property type="component" value="Chromosome I"/>
</dbReference>
<dbReference type="GO" id="GO:0005759">
    <property type="term" value="C:mitochondrial matrix"/>
    <property type="evidence" value="ECO:0000266"/>
    <property type="project" value="PomBase"/>
</dbReference>
<dbReference type="GO" id="GO:0005739">
    <property type="term" value="C:mitochondrion"/>
    <property type="evidence" value="ECO:0000318"/>
    <property type="project" value="GO_Central"/>
</dbReference>
<dbReference type="GO" id="GO:0009055">
    <property type="term" value="F:electron transfer activity"/>
    <property type="evidence" value="ECO:0000318"/>
    <property type="project" value="GO_Central"/>
</dbReference>
<dbReference type="GO" id="GO:0033539">
    <property type="term" value="P:fatty acid beta-oxidation using acyl-CoA dehydrogenase"/>
    <property type="evidence" value="ECO:0000318"/>
    <property type="project" value="GO_Central"/>
</dbReference>
<dbReference type="CDD" id="cd01714">
    <property type="entry name" value="ETF_beta"/>
    <property type="match status" value="1"/>
</dbReference>
<dbReference type="FunFam" id="3.40.50.620:FF:000011">
    <property type="entry name" value="Electron transfer flavoprotein subunit beta"/>
    <property type="match status" value="1"/>
</dbReference>
<dbReference type="Gene3D" id="3.40.50.620">
    <property type="entry name" value="HUPs"/>
    <property type="match status" value="1"/>
</dbReference>
<dbReference type="InterPro" id="IPR000049">
    <property type="entry name" value="ET-Flavoprotein_bsu_CS"/>
</dbReference>
<dbReference type="InterPro" id="IPR014730">
    <property type="entry name" value="ETF_a/b_N"/>
</dbReference>
<dbReference type="InterPro" id="IPR012255">
    <property type="entry name" value="ETF_b"/>
</dbReference>
<dbReference type="InterPro" id="IPR033948">
    <property type="entry name" value="ETF_beta_N"/>
</dbReference>
<dbReference type="InterPro" id="IPR014729">
    <property type="entry name" value="Rossmann-like_a/b/a_fold"/>
</dbReference>
<dbReference type="PANTHER" id="PTHR21294">
    <property type="entry name" value="ELECTRON TRANSFER FLAVOPROTEIN BETA-SUBUNIT"/>
    <property type="match status" value="1"/>
</dbReference>
<dbReference type="PANTHER" id="PTHR21294:SF8">
    <property type="entry name" value="ELECTRON TRANSFER FLAVOPROTEIN SUBUNIT BETA"/>
    <property type="match status" value="1"/>
</dbReference>
<dbReference type="Pfam" id="PF01012">
    <property type="entry name" value="ETF"/>
    <property type="match status" value="1"/>
</dbReference>
<dbReference type="PIRSF" id="PIRSF000090">
    <property type="entry name" value="Beta-ETF"/>
    <property type="match status" value="1"/>
</dbReference>
<dbReference type="SMART" id="SM00893">
    <property type="entry name" value="ETF"/>
    <property type="match status" value="1"/>
</dbReference>
<dbReference type="SUPFAM" id="SSF52402">
    <property type="entry name" value="Adenine nucleotide alpha hydrolases-like"/>
    <property type="match status" value="1"/>
</dbReference>
<dbReference type="PROSITE" id="PS01065">
    <property type="entry name" value="ETF_BETA"/>
    <property type="match status" value="1"/>
</dbReference>
<evidence type="ECO:0000250" key="1"/>
<evidence type="ECO:0000305" key="2"/>
<protein>
    <recommendedName>
        <fullName>Probable electron transfer flavoprotein subunit beta</fullName>
        <shortName>Beta-ETF</shortName>
    </recommendedName>
</protein>
<gene>
    <name type="ORF">SPAC1805.02c</name>
</gene>
<organism>
    <name type="scientific">Schizosaccharomyces pombe (strain 972 / ATCC 24843)</name>
    <name type="common">Fission yeast</name>
    <dbReference type="NCBI Taxonomy" id="284812"/>
    <lineage>
        <taxon>Eukaryota</taxon>
        <taxon>Fungi</taxon>
        <taxon>Dikarya</taxon>
        <taxon>Ascomycota</taxon>
        <taxon>Taphrinomycotina</taxon>
        <taxon>Schizosaccharomycetes</taxon>
        <taxon>Schizosaccharomycetales</taxon>
        <taxon>Schizosaccharomycetaceae</taxon>
        <taxon>Schizosaccharomyces</taxon>
    </lineage>
</organism>